<sequence>MATINQLVRKPRAKKVEKSNVPALEACPQKRGVCTRVYTTTPKKPNSALRKVCRVRLTNGFEVTSYIGGEGHNLQEHSVILIRGGRVKDLPGVRYHTVRGALDCSGVKDRKQSRSKYGVKRPKA</sequence>
<proteinExistence type="inferred from homology"/>
<protein>
    <recommendedName>
        <fullName evidence="2">Small ribosomal subunit protein uS12</fullName>
    </recommendedName>
    <alternativeName>
        <fullName evidence="3">30S ribosomal protein S12</fullName>
    </alternativeName>
</protein>
<evidence type="ECO:0000250" key="1"/>
<evidence type="ECO:0000255" key="2">
    <source>
        <dbReference type="HAMAP-Rule" id="MF_00403"/>
    </source>
</evidence>
<evidence type="ECO:0000305" key="3"/>
<accession>C5BGN0</accession>
<organism>
    <name type="scientific">Edwardsiella ictaluri (strain 93-146)</name>
    <dbReference type="NCBI Taxonomy" id="634503"/>
    <lineage>
        <taxon>Bacteria</taxon>
        <taxon>Pseudomonadati</taxon>
        <taxon>Pseudomonadota</taxon>
        <taxon>Gammaproteobacteria</taxon>
        <taxon>Enterobacterales</taxon>
        <taxon>Hafniaceae</taxon>
        <taxon>Edwardsiella</taxon>
    </lineage>
</organism>
<name>RS12_EDWI9</name>
<keyword id="KW-0488">Methylation</keyword>
<keyword id="KW-0687">Ribonucleoprotein</keyword>
<keyword id="KW-0689">Ribosomal protein</keyword>
<keyword id="KW-0694">RNA-binding</keyword>
<keyword id="KW-0699">rRNA-binding</keyword>
<keyword id="KW-0820">tRNA-binding</keyword>
<comment type="function">
    <text evidence="2">With S4 and S5 plays an important role in translational accuracy.</text>
</comment>
<comment type="function">
    <text evidence="2">Interacts with and stabilizes bases of the 16S rRNA that are involved in tRNA selection in the A site and with the mRNA backbone. Located at the interface of the 30S and 50S subunits, it traverses the body of the 30S subunit contacting proteins on the other side and probably holding the rRNA structure together. The combined cluster of proteins S8, S12 and S17 appears to hold together the shoulder and platform of the 30S subunit.</text>
</comment>
<comment type="subunit">
    <text evidence="2">Part of the 30S ribosomal subunit. Contacts proteins S8 and S17. May interact with IF1 in the 30S initiation complex.</text>
</comment>
<comment type="similarity">
    <text evidence="2">Belongs to the universal ribosomal protein uS12 family.</text>
</comment>
<dbReference type="EMBL" id="CP001600">
    <property type="protein sequence ID" value="ACR70727.1"/>
    <property type="molecule type" value="Genomic_DNA"/>
</dbReference>
<dbReference type="RefSeq" id="WP_012850034.1">
    <property type="nucleotide sequence ID" value="NZ_CP169062.1"/>
</dbReference>
<dbReference type="SMR" id="C5BGN0"/>
<dbReference type="STRING" id="67780.B6E78_09595"/>
<dbReference type="GeneID" id="72530006"/>
<dbReference type="KEGG" id="eic:NT01EI_3599"/>
<dbReference type="HOGENOM" id="CLU_104295_1_2_6"/>
<dbReference type="OrthoDB" id="9802366at2"/>
<dbReference type="Proteomes" id="UP000001485">
    <property type="component" value="Chromosome"/>
</dbReference>
<dbReference type="GO" id="GO:0015935">
    <property type="term" value="C:small ribosomal subunit"/>
    <property type="evidence" value="ECO:0007669"/>
    <property type="project" value="InterPro"/>
</dbReference>
<dbReference type="GO" id="GO:0019843">
    <property type="term" value="F:rRNA binding"/>
    <property type="evidence" value="ECO:0007669"/>
    <property type="project" value="UniProtKB-UniRule"/>
</dbReference>
<dbReference type="GO" id="GO:0003735">
    <property type="term" value="F:structural constituent of ribosome"/>
    <property type="evidence" value="ECO:0007669"/>
    <property type="project" value="InterPro"/>
</dbReference>
<dbReference type="GO" id="GO:0000049">
    <property type="term" value="F:tRNA binding"/>
    <property type="evidence" value="ECO:0007669"/>
    <property type="project" value="UniProtKB-UniRule"/>
</dbReference>
<dbReference type="GO" id="GO:0006412">
    <property type="term" value="P:translation"/>
    <property type="evidence" value="ECO:0007669"/>
    <property type="project" value="UniProtKB-UniRule"/>
</dbReference>
<dbReference type="CDD" id="cd03368">
    <property type="entry name" value="Ribosomal_S12"/>
    <property type="match status" value="1"/>
</dbReference>
<dbReference type="FunFam" id="2.40.50.140:FF:000001">
    <property type="entry name" value="30S ribosomal protein S12"/>
    <property type="match status" value="1"/>
</dbReference>
<dbReference type="Gene3D" id="2.40.50.140">
    <property type="entry name" value="Nucleic acid-binding proteins"/>
    <property type="match status" value="1"/>
</dbReference>
<dbReference type="HAMAP" id="MF_00403_B">
    <property type="entry name" value="Ribosomal_uS12_B"/>
    <property type="match status" value="1"/>
</dbReference>
<dbReference type="InterPro" id="IPR012340">
    <property type="entry name" value="NA-bd_OB-fold"/>
</dbReference>
<dbReference type="InterPro" id="IPR006032">
    <property type="entry name" value="Ribosomal_uS12"/>
</dbReference>
<dbReference type="InterPro" id="IPR005679">
    <property type="entry name" value="Ribosomal_uS12_bac"/>
</dbReference>
<dbReference type="NCBIfam" id="TIGR00981">
    <property type="entry name" value="rpsL_bact"/>
    <property type="match status" value="1"/>
</dbReference>
<dbReference type="PANTHER" id="PTHR11652">
    <property type="entry name" value="30S RIBOSOMAL PROTEIN S12 FAMILY MEMBER"/>
    <property type="match status" value="1"/>
</dbReference>
<dbReference type="Pfam" id="PF00164">
    <property type="entry name" value="Ribosom_S12_S23"/>
    <property type="match status" value="1"/>
</dbReference>
<dbReference type="PIRSF" id="PIRSF002133">
    <property type="entry name" value="Ribosomal_S12/S23"/>
    <property type="match status" value="1"/>
</dbReference>
<dbReference type="PRINTS" id="PR01034">
    <property type="entry name" value="RIBOSOMALS12"/>
</dbReference>
<dbReference type="SUPFAM" id="SSF50249">
    <property type="entry name" value="Nucleic acid-binding proteins"/>
    <property type="match status" value="1"/>
</dbReference>
<dbReference type="PROSITE" id="PS00055">
    <property type="entry name" value="RIBOSOMAL_S12"/>
    <property type="match status" value="1"/>
</dbReference>
<feature type="chain" id="PRO_1000205913" description="Small ribosomal subunit protein uS12">
    <location>
        <begin position="1"/>
        <end position="124"/>
    </location>
</feature>
<feature type="modified residue" description="3-methylthioaspartic acid" evidence="1">
    <location>
        <position position="89"/>
    </location>
</feature>
<reference key="1">
    <citation type="submission" date="2009-03" db="EMBL/GenBank/DDBJ databases">
        <title>Complete genome sequence of Edwardsiella ictaluri 93-146.</title>
        <authorList>
            <person name="Williams M.L."/>
            <person name="Gillaspy A.F."/>
            <person name="Dyer D.W."/>
            <person name="Thune R.L."/>
            <person name="Waldbieser G.C."/>
            <person name="Schuster S.C."/>
            <person name="Gipson J."/>
            <person name="Zaitshik J."/>
            <person name="Landry C."/>
            <person name="Lawrence M.L."/>
        </authorList>
    </citation>
    <scope>NUCLEOTIDE SEQUENCE [LARGE SCALE GENOMIC DNA]</scope>
    <source>
        <strain>93-146</strain>
    </source>
</reference>
<gene>
    <name evidence="2" type="primary">rpsL</name>
    <name type="ordered locus">NT01EI_3599</name>
</gene>